<accession>Q6LVH8</accession>
<comment type="function">
    <text evidence="1">Binds the 23S rRNA.</text>
</comment>
<comment type="cofactor">
    <cofactor evidence="1">
        <name>Zn(2+)</name>
        <dbReference type="ChEBI" id="CHEBI:29105"/>
    </cofactor>
    <text evidence="1">Binds 1 zinc ion per subunit.</text>
</comment>
<comment type="subunit">
    <text evidence="1">Part of the 50S ribosomal subunit.</text>
</comment>
<comment type="similarity">
    <text evidence="1">Belongs to the bacterial ribosomal protein bL31 family. Type A subfamily.</text>
</comment>
<feature type="chain" id="PRO_0000173142" description="Large ribosomal subunit protein bL31">
    <location>
        <begin position="1"/>
        <end position="70"/>
    </location>
</feature>
<feature type="region of interest" description="Disordered" evidence="2">
    <location>
        <begin position="48"/>
        <end position="70"/>
    </location>
</feature>
<feature type="binding site" evidence="1">
    <location>
        <position position="16"/>
    </location>
    <ligand>
        <name>Zn(2+)</name>
        <dbReference type="ChEBI" id="CHEBI:29105"/>
    </ligand>
</feature>
<feature type="binding site" evidence="1">
    <location>
        <position position="18"/>
    </location>
    <ligand>
        <name>Zn(2+)</name>
        <dbReference type="ChEBI" id="CHEBI:29105"/>
    </ligand>
</feature>
<feature type="binding site" evidence="1">
    <location>
        <position position="37"/>
    </location>
    <ligand>
        <name>Zn(2+)</name>
        <dbReference type="ChEBI" id="CHEBI:29105"/>
    </ligand>
</feature>
<feature type="binding site" evidence="1">
    <location>
        <position position="40"/>
    </location>
    <ligand>
        <name>Zn(2+)</name>
        <dbReference type="ChEBI" id="CHEBI:29105"/>
    </ligand>
</feature>
<reference key="1">
    <citation type="journal article" date="2005" name="Science">
        <title>Life at depth: Photobacterium profundum genome sequence and expression analysis.</title>
        <authorList>
            <person name="Vezzi A."/>
            <person name="Campanaro S."/>
            <person name="D'Angelo M."/>
            <person name="Simonato F."/>
            <person name="Vitulo N."/>
            <person name="Lauro F.M."/>
            <person name="Cestaro A."/>
            <person name="Malacrida G."/>
            <person name="Simionati B."/>
            <person name="Cannata N."/>
            <person name="Romualdi C."/>
            <person name="Bartlett D.H."/>
            <person name="Valle G."/>
        </authorList>
    </citation>
    <scope>NUCLEOTIDE SEQUENCE [LARGE SCALE GENOMIC DNA]</scope>
    <source>
        <strain>ATCC BAA-1253 / SS9</strain>
    </source>
</reference>
<organism>
    <name type="scientific">Photobacterium profundum (strain SS9)</name>
    <dbReference type="NCBI Taxonomy" id="298386"/>
    <lineage>
        <taxon>Bacteria</taxon>
        <taxon>Pseudomonadati</taxon>
        <taxon>Pseudomonadota</taxon>
        <taxon>Gammaproteobacteria</taxon>
        <taxon>Vibrionales</taxon>
        <taxon>Vibrionaceae</taxon>
        <taxon>Photobacterium</taxon>
    </lineage>
</organism>
<gene>
    <name evidence="1" type="primary">rpmE</name>
    <name type="ordered locus">PBPRA0258</name>
</gene>
<name>RL31_PHOPR</name>
<proteinExistence type="inferred from homology"/>
<evidence type="ECO:0000255" key="1">
    <source>
        <dbReference type="HAMAP-Rule" id="MF_00501"/>
    </source>
</evidence>
<evidence type="ECO:0000256" key="2">
    <source>
        <dbReference type="SAM" id="MobiDB-lite"/>
    </source>
</evidence>
<evidence type="ECO:0000305" key="3"/>
<dbReference type="EMBL" id="CR378663">
    <property type="protein sequence ID" value="CAG18697.1"/>
    <property type="molecule type" value="Genomic_DNA"/>
</dbReference>
<dbReference type="RefSeq" id="WP_011217072.1">
    <property type="nucleotide sequence ID" value="NC_006370.1"/>
</dbReference>
<dbReference type="SMR" id="Q6LVH8"/>
<dbReference type="STRING" id="298386.PBPRA0258"/>
<dbReference type="KEGG" id="ppr:PBPRA0258"/>
<dbReference type="eggNOG" id="COG0254">
    <property type="taxonomic scope" value="Bacteria"/>
</dbReference>
<dbReference type="HOGENOM" id="CLU_114306_4_3_6"/>
<dbReference type="Proteomes" id="UP000000593">
    <property type="component" value="Chromosome 1"/>
</dbReference>
<dbReference type="GO" id="GO:1990904">
    <property type="term" value="C:ribonucleoprotein complex"/>
    <property type="evidence" value="ECO:0007669"/>
    <property type="project" value="UniProtKB-KW"/>
</dbReference>
<dbReference type="GO" id="GO:0005840">
    <property type="term" value="C:ribosome"/>
    <property type="evidence" value="ECO:0007669"/>
    <property type="project" value="UniProtKB-KW"/>
</dbReference>
<dbReference type="GO" id="GO:0046872">
    <property type="term" value="F:metal ion binding"/>
    <property type="evidence" value="ECO:0007669"/>
    <property type="project" value="UniProtKB-KW"/>
</dbReference>
<dbReference type="GO" id="GO:0019843">
    <property type="term" value="F:rRNA binding"/>
    <property type="evidence" value="ECO:0007669"/>
    <property type="project" value="UniProtKB-KW"/>
</dbReference>
<dbReference type="GO" id="GO:0003735">
    <property type="term" value="F:structural constituent of ribosome"/>
    <property type="evidence" value="ECO:0007669"/>
    <property type="project" value="InterPro"/>
</dbReference>
<dbReference type="GO" id="GO:0006412">
    <property type="term" value="P:translation"/>
    <property type="evidence" value="ECO:0007669"/>
    <property type="project" value="UniProtKB-UniRule"/>
</dbReference>
<dbReference type="Gene3D" id="4.10.830.30">
    <property type="entry name" value="Ribosomal protein L31"/>
    <property type="match status" value="1"/>
</dbReference>
<dbReference type="HAMAP" id="MF_00501">
    <property type="entry name" value="Ribosomal_bL31_1"/>
    <property type="match status" value="1"/>
</dbReference>
<dbReference type="InterPro" id="IPR034704">
    <property type="entry name" value="Ribosomal_bL28/bL31-like_sf"/>
</dbReference>
<dbReference type="InterPro" id="IPR002150">
    <property type="entry name" value="Ribosomal_bL31"/>
</dbReference>
<dbReference type="InterPro" id="IPR027491">
    <property type="entry name" value="Ribosomal_bL31_A"/>
</dbReference>
<dbReference type="InterPro" id="IPR042105">
    <property type="entry name" value="Ribosomal_bL31_sf"/>
</dbReference>
<dbReference type="NCBIfam" id="TIGR00105">
    <property type="entry name" value="L31"/>
    <property type="match status" value="1"/>
</dbReference>
<dbReference type="NCBIfam" id="NF000612">
    <property type="entry name" value="PRK00019.1"/>
    <property type="match status" value="1"/>
</dbReference>
<dbReference type="PANTHER" id="PTHR33280">
    <property type="entry name" value="50S RIBOSOMAL PROTEIN L31, CHLOROPLASTIC"/>
    <property type="match status" value="1"/>
</dbReference>
<dbReference type="PANTHER" id="PTHR33280:SF6">
    <property type="entry name" value="LARGE RIBOSOMAL SUBUNIT PROTEIN BL31A"/>
    <property type="match status" value="1"/>
</dbReference>
<dbReference type="Pfam" id="PF01197">
    <property type="entry name" value="Ribosomal_L31"/>
    <property type="match status" value="1"/>
</dbReference>
<dbReference type="PRINTS" id="PR01249">
    <property type="entry name" value="RIBOSOMALL31"/>
</dbReference>
<dbReference type="SUPFAM" id="SSF143800">
    <property type="entry name" value="L28p-like"/>
    <property type="match status" value="1"/>
</dbReference>
<dbReference type="PROSITE" id="PS01143">
    <property type="entry name" value="RIBOSOMAL_L31"/>
    <property type="match status" value="1"/>
</dbReference>
<protein>
    <recommendedName>
        <fullName evidence="1">Large ribosomal subunit protein bL31</fullName>
    </recommendedName>
    <alternativeName>
        <fullName evidence="3">50S ribosomal protein L31</fullName>
    </alternativeName>
</protein>
<keyword id="KW-0479">Metal-binding</keyword>
<keyword id="KW-1185">Reference proteome</keyword>
<keyword id="KW-0687">Ribonucleoprotein</keyword>
<keyword id="KW-0689">Ribosomal protein</keyword>
<keyword id="KW-0694">RNA-binding</keyword>
<keyword id="KW-0699">rRNA-binding</keyword>
<keyword id="KW-0862">Zinc</keyword>
<sequence>MKQGIHPDYSATNARCSCGNTFIFQSTMTKDVNLDVCDKCHPFYTGKQRQASSGGRVDKFNKRFGALGSK</sequence>